<accession>A0RJX2</accession>
<dbReference type="EC" id="6.1.1.4" evidence="1"/>
<dbReference type="EMBL" id="CP000485">
    <property type="protein sequence ID" value="ABK87515.1"/>
    <property type="molecule type" value="Genomic_DNA"/>
</dbReference>
<dbReference type="RefSeq" id="WP_000009448.1">
    <property type="nucleotide sequence ID" value="NC_008600.1"/>
</dbReference>
<dbReference type="SMR" id="A0RJX2"/>
<dbReference type="GeneID" id="45024607"/>
<dbReference type="KEGG" id="btl:BALH_4313"/>
<dbReference type="HOGENOM" id="CLU_004427_0_0_9"/>
<dbReference type="GO" id="GO:0005829">
    <property type="term" value="C:cytosol"/>
    <property type="evidence" value="ECO:0007669"/>
    <property type="project" value="TreeGrafter"/>
</dbReference>
<dbReference type="GO" id="GO:0002161">
    <property type="term" value="F:aminoacyl-tRNA deacylase activity"/>
    <property type="evidence" value="ECO:0007669"/>
    <property type="project" value="InterPro"/>
</dbReference>
<dbReference type="GO" id="GO:0005524">
    <property type="term" value="F:ATP binding"/>
    <property type="evidence" value="ECO:0007669"/>
    <property type="project" value="UniProtKB-UniRule"/>
</dbReference>
<dbReference type="GO" id="GO:0004823">
    <property type="term" value="F:leucine-tRNA ligase activity"/>
    <property type="evidence" value="ECO:0007669"/>
    <property type="project" value="UniProtKB-UniRule"/>
</dbReference>
<dbReference type="GO" id="GO:0006429">
    <property type="term" value="P:leucyl-tRNA aminoacylation"/>
    <property type="evidence" value="ECO:0007669"/>
    <property type="project" value="UniProtKB-UniRule"/>
</dbReference>
<dbReference type="CDD" id="cd07958">
    <property type="entry name" value="Anticodon_Ia_Leu_BEm"/>
    <property type="match status" value="1"/>
</dbReference>
<dbReference type="CDD" id="cd00812">
    <property type="entry name" value="LeuRS_core"/>
    <property type="match status" value="1"/>
</dbReference>
<dbReference type="FunFam" id="1.10.730.10:FF:000012">
    <property type="entry name" value="Leucine--tRNA ligase"/>
    <property type="match status" value="1"/>
</dbReference>
<dbReference type="FunFam" id="1.10.730.10:FF:000018">
    <property type="entry name" value="Leucine--tRNA ligase"/>
    <property type="match status" value="1"/>
</dbReference>
<dbReference type="FunFam" id="3.10.20.590:FF:000001">
    <property type="entry name" value="Leucine--tRNA ligase"/>
    <property type="match status" value="1"/>
</dbReference>
<dbReference type="FunFam" id="3.40.50.620:FF:000056">
    <property type="entry name" value="Leucine--tRNA ligase"/>
    <property type="match status" value="1"/>
</dbReference>
<dbReference type="FunFam" id="3.40.50.620:FF:000077">
    <property type="entry name" value="Leucine--tRNA ligase"/>
    <property type="match status" value="1"/>
</dbReference>
<dbReference type="Gene3D" id="3.10.20.590">
    <property type="match status" value="1"/>
</dbReference>
<dbReference type="Gene3D" id="3.40.50.620">
    <property type="entry name" value="HUPs"/>
    <property type="match status" value="2"/>
</dbReference>
<dbReference type="Gene3D" id="1.10.730.10">
    <property type="entry name" value="Isoleucyl-tRNA Synthetase, Domain 1"/>
    <property type="match status" value="1"/>
</dbReference>
<dbReference type="HAMAP" id="MF_00049_B">
    <property type="entry name" value="Leu_tRNA_synth_B"/>
    <property type="match status" value="1"/>
</dbReference>
<dbReference type="InterPro" id="IPR001412">
    <property type="entry name" value="aa-tRNA-synth_I_CS"/>
</dbReference>
<dbReference type="InterPro" id="IPR002300">
    <property type="entry name" value="aa-tRNA-synth_Ia"/>
</dbReference>
<dbReference type="InterPro" id="IPR002302">
    <property type="entry name" value="Leu-tRNA-ligase"/>
</dbReference>
<dbReference type="InterPro" id="IPR025709">
    <property type="entry name" value="Leu_tRNA-synth_edit"/>
</dbReference>
<dbReference type="InterPro" id="IPR013155">
    <property type="entry name" value="M/V/L/I-tRNA-synth_anticd-bd"/>
</dbReference>
<dbReference type="InterPro" id="IPR015413">
    <property type="entry name" value="Methionyl/Leucyl_tRNA_Synth"/>
</dbReference>
<dbReference type="InterPro" id="IPR014729">
    <property type="entry name" value="Rossmann-like_a/b/a_fold"/>
</dbReference>
<dbReference type="InterPro" id="IPR009080">
    <property type="entry name" value="tRNAsynth_Ia_anticodon-bd"/>
</dbReference>
<dbReference type="InterPro" id="IPR009008">
    <property type="entry name" value="Val/Leu/Ile-tRNA-synth_edit"/>
</dbReference>
<dbReference type="NCBIfam" id="TIGR00396">
    <property type="entry name" value="leuS_bact"/>
    <property type="match status" value="1"/>
</dbReference>
<dbReference type="PANTHER" id="PTHR43740:SF2">
    <property type="entry name" value="LEUCINE--TRNA LIGASE, MITOCHONDRIAL"/>
    <property type="match status" value="1"/>
</dbReference>
<dbReference type="PANTHER" id="PTHR43740">
    <property type="entry name" value="LEUCYL-TRNA SYNTHETASE"/>
    <property type="match status" value="1"/>
</dbReference>
<dbReference type="Pfam" id="PF08264">
    <property type="entry name" value="Anticodon_1"/>
    <property type="match status" value="1"/>
</dbReference>
<dbReference type="Pfam" id="PF00133">
    <property type="entry name" value="tRNA-synt_1"/>
    <property type="match status" value="1"/>
</dbReference>
<dbReference type="Pfam" id="PF13603">
    <property type="entry name" value="tRNA-synt_1_2"/>
    <property type="match status" value="1"/>
</dbReference>
<dbReference type="Pfam" id="PF09334">
    <property type="entry name" value="tRNA-synt_1g"/>
    <property type="match status" value="1"/>
</dbReference>
<dbReference type="PRINTS" id="PR00985">
    <property type="entry name" value="TRNASYNTHLEU"/>
</dbReference>
<dbReference type="SUPFAM" id="SSF47323">
    <property type="entry name" value="Anticodon-binding domain of a subclass of class I aminoacyl-tRNA synthetases"/>
    <property type="match status" value="1"/>
</dbReference>
<dbReference type="SUPFAM" id="SSF52374">
    <property type="entry name" value="Nucleotidylyl transferase"/>
    <property type="match status" value="1"/>
</dbReference>
<dbReference type="SUPFAM" id="SSF50677">
    <property type="entry name" value="ValRS/IleRS/LeuRS editing domain"/>
    <property type="match status" value="1"/>
</dbReference>
<dbReference type="PROSITE" id="PS00178">
    <property type="entry name" value="AA_TRNA_LIGASE_I"/>
    <property type="match status" value="1"/>
</dbReference>
<proteinExistence type="inferred from homology"/>
<comment type="catalytic activity">
    <reaction evidence="1">
        <text>tRNA(Leu) + L-leucine + ATP = L-leucyl-tRNA(Leu) + AMP + diphosphate</text>
        <dbReference type="Rhea" id="RHEA:11688"/>
        <dbReference type="Rhea" id="RHEA-COMP:9613"/>
        <dbReference type="Rhea" id="RHEA-COMP:9622"/>
        <dbReference type="ChEBI" id="CHEBI:30616"/>
        <dbReference type="ChEBI" id="CHEBI:33019"/>
        <dbReference type="ChEBI" id="CHEBI:57427"/>
        <dbReference type="ChEBI" id="CHEBI:78442"/>
        <dbReference type="ChEBI" id="CHEBI:78494"/>
        <dbReference type="ChEBI" id="CHEBI:456215"/>
        <dbReference type="EC" id="6.1.1.4"/>
    </reaction>
</comment>
<comment type="subcellular location">
    <subcellularLocation>
        <location evidence="1">Cytoplasm</location>
    </subcellularLocation>
</comment>
<comment type="similarity">
    <text evidence="1">Belongs to the class-I aminoacyl-tRNA synthetase family.</text>
</comment>
<gene>
    <name evidence="1" type="primary">leuS</name>
    <name type="ordered locus">BALH_4313</name>
</gene>
<name>SYL_BACAH</name>
<organism>
    <name type="scientific">Bacillus thuringiensis (strain Al Hakam)</name>
    <dbReference type="NCBI Taxonomy" id="412694"/>
    <lineage>
        <taxon>Bacteria</taxon>
        <taxon>Bacillati</taxon>
        <taxon>Bacillota</taxon>
        <taxon>Bacilli</taxon>
        <taxon>Bacillales</taxon>
        <taxon>Bacillaceae</taxon>
        <taxon>Bacillus</taxon>
        <taxon>Bacillus cereus group</taxon>
    </lineage>
</organism>
<feature type="chain" id="PRO_1000009292" description="Leucine--tRNA ligase">
    <location>
        <begin position="1"/>
        <end position="802"/>
    </location>
</feature>
<feature type="short sequence motif" description="'HIGH' region">
    <location>
        <begin position="40"/>
        <end position="51"/>
    </location>
</feature>
<feature type="short sequence motif" description="'KMSKS' region">
    <location>
        <begin position="576"/>
        <end position="580"/>
    </location>
</feature>
<feature type="binding site" evidence="1">
    <location>
        <position position="579"/>
    </location>
    <ligand>
        <name>ATP</name>
        <dbReference type="ChEBI" id="CHEBI:30616"/>
    </ligand>
</feature>
<evidence type="ECO:0000255" key="1">
    <source>
        <dbReference type="HAMAP-Rule" id="MF_00049"/>
    </source>
</evidence>
<protein>
    <recommendedName>
        <fullName evidence="1">Leucine--tRNA ligase</fullName>
        <ecNumber evidence="1">6.1.1.4</ecNumber>
    </recommendedName>
    <alternativeName>
        <fullName evidence="1">Leucyl-tRNA synthetase</fullName>
        <shortName evidence="1">LeuRS</shortName>
    </alternativeName>
</protein>
<sequence>MSFNHQEIEKKWQGYWEENKTFRTPDETEKPKFYALDMFPYPSGAGLHVGHPEGYTATDILSRMKRMQGYNVLHPMGWDAFGLPAEQYALDTGNSPAEFTEHNINTFRNQIKSLGFSYDWDREVNTTDPNYYKWTQWIFLKLFEKGLAYVDEVPVNWCPALGTVLANEEIIDGKSERGGHPVERRPMRQWMLKITAYGDRLLEDLDELDWPESLKDMQRNWIGRSEGAEVHFNIDGTDEKFTVFTTRPDTLFGASYCVLAPEHALVADITTADQKEAVEAYINSVKMKSDLERTELAKEKTGVFTGAYAVNPVNGEKLPIWIADYVLATYGTGAVMAVPAHDERDYEFASTFNLPMKEVVKGGDITKEAYTGDGAHVNSAFLDGLNKEEAIAKMIEWLEVTSAGNQKVTYRLRDWLFSRQRYWGEPIPVIHWEDGTMTAVKEEELPLVLPKTENIRPSGTGESPLANIDEWVNVVDPETGKKGRRETNTMPQWAGSCWYYLRYIDPNNSEALVDPEKVKQWLPVDIYIGGAEHAVLHLLYARFWHKVLYDIGVVPTKEPFQQLFNQGMILGENNEKMSKSKGNVVNPDDIVASHGADTLRLYEMFMGPLDASIAWSENGLDGARRFLDRVWRLFVQDNGELSEKITDAPNKDLEKAYHQTVKKVTEDYAELRFNTAISQMMVFINDAYKAETLPKEYVEGFVKMIAPVAPHIGEELWSKLGYNETITYASWPTFDESKLVEDEVEIVVQVMGKVRAKLTMSKDASKDEMEKLALEAIQDQIEGKTVRKVIVVPGKLVNVVAN</sequence>
<keyword id="KW-0030">Aminoacyl-tRNA synthetase</keyword>
<keyword id="KW-0067">ATP-binding</keyword>
<keyword id="KW-0963">Cytoplasm</keyword>
<keyword id="KW-0436">Ligase</keyword>
<keyword id="KW-0547">Nucleotide-binding</keyword>
<keyword id="KW-0648">Protein biosynthesis</keyword>
<reference key="1">
    <citation type="journal article" date="2007" name="J. Bacteriol.">
        <title>The complete genome sequence of Bacillus thuringiensis Al Hakam.</title>
        <authorList>
            <person name="Challacombe J.F."/>
            <person name="Altherr M.R."/>
            <person name="Xie G."/>
            <person name="Bhotika S.S."/>
            <person name="Brown N."/>
            <person name="Bruce D."/>
            <person name="Campbell C.S."/>
            <person name="Campbell M.L."/>
            <person name="Chen J."/>
            <person name="Chertkov O."/>
            <person name="Cleland C."/>
            <person name="Dimitrijevic M."/>
            <person name="Doggett N.A."/>
            <person name="Fawcett J.J."/>
            <person name="Glavina T."/>
            <person name="Goodwin L.A."/>
            <person name="Green L.D."/>
            <person name="Han C.S."/>
            <person name="Hill K.K."/>
            <person name="Hitchcock P."/>
            <person name="Jackson P.J."/>
            <person name="Keim P."/>
            <person name="Kewalramani A.R."/>
            <person name="Longmire J."/>
            <person name="Lucas S."/>
            <person name="Malfatti S."/>
            <person name="Martinez D."/>
            <person name="McMurry K."/>
            <person name="Meincke L.J."/>
            <person name="Misra M."/>
            <person name="Moseman B.L."/>
            <person name="Mundt M."/>
            <person name="Munk A.C."/>
            <person name="Okinaka R.T."/>
            <person name="Parson-Quintana B."/>
            <person name="Reilly L.P."/>
            <person name="Richardson P."/>
            <person name="Robinson D.L."/>
            <person name="Saunders E."/>
            <person name="Tapia R."/>
            <person name="Tesmer J.G."/>
            <person name="Thayer N."/>
            <person name="Thompson L.S."/>
            <person name="Tice H."/>
            <person name="Ticknor L.O."/>
            <person name="Wills P.L."/>
            <person name="Gilna P."/>
            <person name="Brettin T.S."/>
        </authorList>
    </citation>
    <scope>NUCLEOTIDE SEQUENCE [LARGE SCALE GENOMIC DNA]</scope>
    <source>
        <strain>Al Hakam</strain>
    </source>
</reference>